<gene>
    <name type="primary">MEE39</name>
    <name type="ordered locus">At3g46330</name>
    <name type="ORF">F18L15.50</name>
</gene>
<dbReference type="EC" id="2.7.11.1"/>
<dbReference type="EMBL" id="AL133298">
    <property type="protein sequence ID" value="CAB62024.1"/>
    <property type="status" value="ALT_SEQ"/>
    <property type="molecule type" value="Genomic_DNA"/>
</dbReference>
<dbReference type="EMBL" id="CP002686">
    <property type="protein sequence ID" value="AEE78147.1"/>
    <property type="molecule type" value="Genomic_DNA"/>
</dbReference>
<dbReference type="EMBL" id="AK228880">
    <property type="protein sequence ID" value="BAF00771.1"/>
    <property type="molecule type" value="mRNA"/>
</dbReference>
<dbReference type="EMBL" id="AK229346">
    <property type="protein sequence ID" value="BAF01209.1"/>
    <property type="molecule type" value="mRNA"/>
</dbReference>
<dbReference type="EMBL" id="FJ708732">
    <property type="protein sequence ID" value="ACN59327.1"/>
    <property type="molecule type" value="mRNA"/>
</dbReference>
<dbReference type="PIR" id="T45690">
    <property type="entry name" value="T45690"/>
</dbReference>
<dbReference type="RefSeq" id="NP_190217.2">
    <property type="nucleotide sequence ID" value="NM_114500.5"/>
</dbReference>
<dbReference type="SMR" id="C0LGP2"/>
<dbReference type="BioGRID" id="9098">
    <property type="interactions" value="26"/>
</dbReference>
<dbReference type="FunCoup" id="C0LGP2">
    <property type="interactions" value="12"/>
</dbReference>
<dbReference type="IntAct" id="C0LGP2">
    <property type="interactions" value="30"/>
</dbReference>
<dbReference type="STRING" id="3702.C0LGP2"/>
<dbReference type="GlyCosmos" id="C0LGP2">
    <property type="glycosylation" value="8 sites, No reported glycans"/>
</dbReference>
<dbReference type="GlyGen" id="C0LGP2">
    <property type="glycosylation" value="8 sites"/>
</dbReference>
<dbReference type="iPTMnet" id="C0LGP2"/>
<dbReference type="PaxDb" id="3702-AT3G46330.1"/>
<dbReference type="ProteomicsDB" id="228857"/>
<dbReference type="EnsemblPlants" id="AT3G46330.1">
    <property type="protein sequence ID" value="AT3G46330.1"/>
    <property type="gene ID" value="AT3G46330"/>
</dbReference>
<dbReference type="GeneID" id="823778"/>
<dbReference type="Gramene" id="AT3G46330.1">
    <property type="protein sequence ID" value="AT3G46330.1"/>
    <property type="gene ID" value="AT3G46330"/>
</dbReference>
<dbReference type="KEGG" id="ath:AT3G46330"/>
<dbReference type="Araport" id="AT3G46330"/>
<dbReference type="TAIR" id="AT3G46330">
    <property type="gene designation" value="MEE39"/>
</dbReference>
<dbReference type="eggNOG" id="ENOG502QQCZ">
    <property type="taxonomic scope" value="Eukaryota"/>
</dbReference>
<dbReference type="HOGENOM" id="CLU_000288_41_1_1"/>
<dbReference type="InParanoid" id="C0LGP2"/>
<dbReference type="OMA" id="ARINTNQ"/>
<dbReference type="PhylomeDB" id="C0LGP2"/>
<dbReference type="PRO" id="PR:C0LGP2"/>
<dbReference type="Proteomes" id="UP000006548">
    <property type="component" value="Chromosome 3"/>
</dbReference>
<dbReference type="ExpressionAtlas" id="C0LGP2">
    <property type="expression patterns" value="baseline and differential"/>
</dbReference>
<dbReference type="GO" id="GO:0016020">
    <property type="term" value="C:membrane"/>
    <property type="evidence" value="ECO:0007669"/>
    <property type="project" value="UniProtKB-SubCell"/>
</dbReference>
<dbReference type="GO" id="GO:0005524">
    <property type="term" value="F:ATP binding"/>
    <property type="evidence" value="ECO:0007669"/>
    <property type="project" value="UniProtKB-KW"/>
</dbReference>
<dbReference type="GO" id="GO:0106310">
    <property type="term" value="F:protein serine kinase activity"/>
    <property type="evidence" value="ECO:0007669"/>
    <property type="project" value="RHEA"/>
</dbReference>
<dbReference type="GO" id="GO:0004674">
    <property type="term" value="F:protein serine/threonine kinase activity"/>
    <property type="evidence" value="ECO:0007669"/>
    <property type="project" value="UniProtKB-KW"/>
</dbReference>
<dbReference type="GO" id="GO:0009793">
    <property type="term" value="P:embryo development ending in seed dormancy"/>
    <property type="evidence" value="ECO:0000315"/>
    <property type="project" value="TAIR"/>
</dbReference>
<dbReference type="GO" id="GO:0009960">
    <property type="term" value="P:endosperm development"/>
    <property type="evidence" value="ECO:0000315"/>
    <property type="project" value="UniProtKB"/>
</dbReference>
<dbReference type="CDD" id="cd14066">
    <property type="entry name" value="STKc_IRAK"/>
    <property type="match status" value="1"/>
</dbReference>
<dbReference type="FunFam" id="3.80.10.10:FF:000129">
    <property type="entry name" value="Leucine-rich repeat receptor-like kinase"/>
    <property type="match status" value="1"/>
</dbReference>
<dbReference type="FunFam" id="3.30.200.20:FF:000394">
    <property type="entry name" value="Leucine-rich repeat receptor-like protein kinase"/>
    <property type="match status" value="1"/>
</dbReference>
<dbReference type="FunFam" id="1.10.510.10:FF:000146">
    <property type="entry name" value="LRR receptor-like serine/threonine-protein kinase IOS1"/>
    <property type="match status" value="1"/>
</dbReference>
<dbReference type="Gene3D" id="3.30.200.20">
    <property type="entry name" value="Phosphorylase Kinase, domain 1"/>
    <property type="match status" value="1"/>
</dbReference>
<dbReference type="Gene3D" id="3.80.10.10">
    <property type="entry name" value="Ribonuclease Inhibitor"/>
    <property type="match status" value="1"/>
</dbReference>
<dbReference type="Gene3D" id="1.10.510.10">
    <property type="entry name" value="Transferase(Phosphotransferase) domain 1"/>
    <property type="match status" value="1"/>
</dbReference>
<dbReference type="InterPro" id="IPR011009">
    <property type="entry name" value="Kinase-like_dom_sf"/>
</dbReference>
<dbReference type="InterPro" id="IPR001611">
    <property type="entry name" value="Leu-rich_rpt"/>
</dbReference>
<dbReference type="InterPro" id="IPR032675">
    <property type="entry name" value="LRR_dom_sf"/>
</dbReference>
<dbReference type="InterPro" id="IPR024788">
    <property type="entry name" value="Malectin-like_Carb-bd_dom"/>
</dbReference>
<dbReference type="InterPro" id="IPR000719">
    <property type="entry name" value="Prot_kinase_dom"/>
</dbReference>
<dbReference type="InterPro" id="IPR017441">
    <property type="entry name" value="Protein_kinase_ATP_BS"/>
</dbReference>
<dbReference type="InterPro" id="IPR001245">
    <property type="entry name" value="Ser-Thr/Tyr_kinase_cat_dom"/>
</dbReference>
<dbReference type="InterPro" id="IPR008271">
    <property type="entry name" value="Ser/Thr_kinase_AS"/>
</dbReference>
<dbReference type="PANTHER" id="PTHR45631:SF207">
    <property type="entry name" value="LRR RECEPTOR-LIKE SERINE_THREONINE-PROTEIN KINASE MEE39-RELATED"/>
    <property type="match status" value="1"/>
</dbReference>
<dbReference type="PANTHER" id="PTHR45631">
    <property type="entry name" value="OS07G0107800 PROTEIN-RELATED"/>
    <property type="match status" value="1"/>
</dbReference>
<dbReference type="Pfam" id="PF13855">
    <property type="entry name" value="LRR_8"/>
    <property type="match status" value="1"/>
</dbReference>
<dbReference type="Pfam" id="PF12819">
    <property type="entry name" value="Malectin_like"/>
    <property type="match status" value="1"/>
</dbReference>
<dbReference type="Pfam" id="PF07714">
    <property type="entry name" value="PK_Tyr_Ser-Thr"/>
    <property type="match status" value="1"/>
</dbReference>
<dbReference type="PRINTS" id="PR00019">
    <property type="entry name" value="LEURICHRPT"/>
</dbReference>
<dbReference type="SMART" id="SM00220">
    <property type="entry name" value="S_TKc"/>
    <property type="match status" value="1"/>
</dbReference>
<dbReference type="SUPFAM" id="SSF52058">
    <property type="entry name" value="L domain-like"/>
    <property type="match status" value="1"/>
</dbReference>
<dbReference type="SUPFAM" id="SSF56112">
    <property type="entry name" value="Protein kinase-like (PK-like)"/>
    <property type="match status" value="1"/>
</dbReference>
<dbReference type="PROSITE" id="PS51450">
    <property type="entry name" value="LRR"/>
    <property type="match status" value="2"/>
</dbReference>
<dbReference type="PROSITE" id="PS00107">
    <property type="entry name" value="PROTEIN_KINASE_ATP"/>
    <property type="match status" value="1"/>
</dbReference>
<dbReference type="PROSITE" id="PS50011">
    <property type="entry name" value="PROTEIN_KINASE_DOM"/>
    <property type="match status" value="1"/>
</dbReference>
<dbReference type="PROSITE" id="PS00108">
    <property type="entry name" value="PROTEIN_KINASE_ST"/>
    <property type="match status" value="1"/>
</dbReference>
<keyword id="KW-0067">ATP-binding</keyword>
<keyword id="KW-0217">Developmental protein</keyword>
<keyword id="KW-0325">Glycoprotein</keyword>
<keyword id="KW-0418">Kinase</keyword>
<keyword id="KW-0433">Leucine-rich repeat</keyword>
<keyword id="KW-0472">Membrane</keyword>
<keyword id="KW-0547">Nucleotide-binding</keyword>
<keyword id="KW-0597">Phosphoprotein</keyword>
<keyword id="KW-0675">Receptor</keyword>
<keyword id="KW-1185">Reference proteome</keyword>
<keyword id="KW-0677">Repeat</keyword>
<keyword id="KW-0723">Serine/threonine-protein kinase</keyword>
<keyword id="KW-0732">Signal</keyword>
<keyword id="KW-0808">Transferase</keyword>
<keyword id="KW-0812">Transmembrane</keyword>
<keyword id="KW-1133">Transmembrane helix</keyword>
<sequence>MKNLCWVFLSLFWFGVFLIIRFAEGQNQEGFISLDCGLPLNEPPYIESETGIQFSSDENFIQSGKTGRIPKNLESENLKQYATLRYFPDGIRNCYDLRVEEGRNYLIRATFFYGNFDGLNVSPEFDMHIGPNKWTTIDLQIVPDGTVKEIIHIPRSNSLQICLVKTGATIPMISALELRPLANDTYIAKSGSLKYYFRMYLSNATVLLRYPKDVYDRSWVPYIQPEWNQISTTSNVSNKNHYDPPQVALKMAATPTNLDAALTMVWRLENPDDQIYLYMHFSEIQVLKANDTREFDIILNGETINTRGVTPKYLEIMTWLTTNPRQCNGGICRMQLTKTQKSTLPPLLNAFEVYSVLQLPQSQTNEIEVVAIKNIRTTYGLSRISWQGDPCVPKQFLWDGLNCNITDISAPPRIISLNLSSSGLSGTIVSNFQNLAHLESLDLSNNSLSGIVPEFLATMKSLLVINLSGNKLSGAIPQALRDREREGLKLNVLGNKELCLSSTCIDKPKKKVAVKVVAPVASIAAIVVVILLFVFKKKMSSRNKPEPWIKTKKKRFTYSEVMEMTKNLQRPLGEGGFGVVYHGDLNGSEQVAVKLLSQTSAQGYKEFKAEVELLLRVHHINLVNLVGYCDEQDHFALIYEYMSNGDLHQHLSGKHGGSVLNWGTRLQIAIEAALGLEYLHTGCKPAMVHRDVKSTNILLDEEFKAKIADFGLSRSFQVGGDQSQVSTVVAGTLGYLDPEYYLTSELSEKSDVYSFGILLLEIITNQRVIDQTRENPNIAEWVTFVIKKGDTSQIVDPKLHGNYDTHSVWRALEVAMSCANPSSVKRPNMSQVIINLKECLASENTRISRNNQNMDSGHSSDQLNVTVTFDTDVKPKAR</sequence>
<name>MEE39_ARATH</name>
<proteinExistence type="evidence at protein level"/>
<reference key="1">
    <citation type="journal article" date="2000" name="Nature">
        <title>Sequence and analysis of chromosome 3 of the plant Arabidopsis thaliana.</title>
        <authorList>
            <person name="Salanoubat M."/>
            <person name="Lemcke K."/>
            <person name="Rieger M."/>
            <person name="Ansorge W."/>
            <person name="Unseld M."/>
            <person name="Fartmann B."/>
            <person name="Valle G."/>
            <person name="Bloecker H."/>
            <person name="Perez-Alonso M."/>
            <person name="Obermaier B."/>
            <person name="Delseny M."/>
            <person name="Boutry M."/>
            <person name="Grivell L.A."/>
            <person name="Mache R."/>
            <person name="Puigdomenech P."/>
            <person name="De Simone V."/>
            <person name="Choisne N."/>
            <person name="Artiguenave F."/>
            <person name="Robert C."/>
            <person name="Brottier P."/>
            <person name="Wincker P."/>
            <person name="Cattolico L."/>
            <person name="Weissenbach J."/>
            <person name="Saurin W."/>
            <person name="Quetier F."/>
            <person name="Schaefer M."/>
            <person name="Mueller-Auer S."/>
            <person name="Gabel C."/>
            <person name="Fuchs M."/>
            <person name="Benes V."/>
            <person name="Wurmbach E."/>
            <person name="Drzonek H."/>
            <person name="Erfle H."/>
            <person name="Jordan N."/>
            <person name="Bangert S."/>
            <person name="Wiedelmann R."/>
            <person name="Kranz H."/>
            <person name="Voss H."/>
            <person name="Holland R."/>
            <person name="Brandt P."/>
            <person name="Nyakatura G."/>
            <person name="Vezzi A."/>
            <person name="D'Angelo M."/>
            <person name="Pallavicini A."/>
            <person name="Toppo S."/>
            <person name="Simionati B."/>
            <person name="Conrad A."/>
            <person name="Hornischer K."/>
            <person name="Kauer G."/>
            <person name="Loehnert T.-H."/>
            <person name="Nordsiek G."/>
            <person name="Reichelt J."/>
            <person name="Scharfe M."/>
            <person name="Schoen O."/>
            <person name="Bargues M."/>
            <person name="Terol J."/>
            <person name="Climent J."/>
            <person name="Navarro P."/>
            <person name="Collado C."/>
            <person name="Perez-Perez A."/>
            <person name="Ottenwaelder B."/>
            <person name="Duchemin D."/>
            <person name="Cooke R."/>
            <person name="Laudie M."/>
            <person name="Berger-Llauro C."/>
            <person name="Purnelle B."/>
            <person name="Masuy D."/>
            <person name="de Haan M."/>
            <person name="Maarse A.C."/>
            <person name="Alcaraz J.-P."/>
            <person name="Cottet A."/>
            <person name="Casacuberta E."/>
            <person name="Monfort A."/>
            <person name="Argiriou A."/>
            <person name="Flores M."/>
            <person name="Liguori R."/>
            <person name="Vitale D."/>
            <person name="Mannhaupt G."/>
            <person name="Haase D."/>
            <person name="Schoof H."/>
            <person name="Rudd S."/>
            <person name="Zaccaria P."/>
            <person name="Mewes H.-W."/>
            <person name="Mayer K.F.X."/>
            <person name="Kaul S."/>
            <person name="Town C.D."/>
            <person name="Koo H.L."/>
            <person name="Tallon L.J."/>
            <person name="Jenkins J."/>
            <person name="Rooney T."/>
            <person name="Rizzo M."/>
            <person name="Walts A."/>
            <person name="Utterback T."/>
            <person name="Fujii C.Y."/>
            <person name="Shea T.P."/>
            <person name="Creasy T.H."/>
            <person name="Haas B."/>
            <person name="Maiti R."/>
            <person name="Wu D."/>
            <person name="Peterson J."/>
            <person name="Van Aken S."/>
            <person name="Pai G."/>
            <person name="Militscher J."/>
            <person name="Sellers P."/>
            <person name="Gill J.E."/>
            <person name="Feldblyum T.V."/>
            <person name="Preuss D."/>
            <person name="Lin X."/>
            <person name="Nierman W.C."/>
            <person name="Salzberg S.L."/>
            <person name="White O."/>
            <person name="Venter J.C."/>
            <person name="Fraser C.M."/>
            <person name="Kaneko T."/>
            <person name="Nakamura Y."/>
            <person name="Sato S."/>
            <person name="Kato T."/>
            <person name="Asamizu E."/>
            <person name="Sasamoto S."/>
            <person name="Kimura T."/>
            <person name="Idesawa K."/>
            <person name="Kawashima K."/>
            <person name="Kishida Y."/>
            <person name="Kiyokawa C."/>
            <person name="Kohara M."/>
            <person name="Matsumoto M."/>
            <person name="Matsuno A."/>
            <person name="Muraki A."/>
            <person name="Nakayama S."/>
            <person name="Nakazaki N."/>
            <person name="Shinpo S."/>
            <person name="Takeuchi C."/>
            <person name="Wada T."/>
            <person name="Watanabe A."/>
            <person name="Yamada M."/>
            <person name="Yasuda M."/>
            <person name="Tabata S."/>
        </authorList>
    </citation>
    <scope>NUCLEOTIDE SEQUENCE [LARGE SCALE GENOMIC DNA]</scope>
    <source>
        <strain>cv. Columbia</strain>
    </source>
</reference>
<reference key="2">
    <citation type="journal article" date="2017" name="Plant J.">
        <title>Araport11: a complete reannotation of the Arabidopsis thaliana reference genome.</title>
        <authorList>
            <person name="Cheng C.Y."/>
            <person name="Krishnakumar V."/>
            <person name="Chan A.P."/>
            <person name="Thibaud-Nissen F."/>
            <person name="Schobel S."/>
            <person name="Town C.D."/>
        </authorList>
    </citation>
    <scope>GENOME REANNOTATION</scope>
    <source>
        <strain>cv. Columbia</strain>
    </source>
</reference>
<reference key="3">
    <citation type="submission" date="2006-07" db="EMBL/GenBank/DDBJ databases">
        <title>Large-scale analysis of RIKEN Arabidopsis full-length (RAFL) cDNAs.</title>
        <authorList>
            <person name="Totoki Y."/>
            <person name="Seki M."/>
            <person name="Ishida J."/>
            <person name="Nakajima M."/>
            <person name="Enju A."/>
            <person name="Kamiya A."/>
            <person name="Narusaka M."/>
            <person name="Shin-i T."/>
            <person name="Nakagawa M."/>
            <person name="Sakamoto N."/>
            <person name="Oishi K."/>
            <person name="Kohara Y."/>
            <person name="Kobayashi M."/>
            <person name="Toyoda A."/>
            <person name="Sakaki Y."/>
            <person name="Sakurai T."/>
            <person name="Iida K."/>
            <person name="Akiyama K."/>
            <person name="Satou M."/>
            <person name="Toyoda T."/>
            <person name="Konagaya A."/>
            <person name="Carninci P."/>
            <person name="Kawai J."/>
            <person name="Hayashizaki Y."/>
            <person name="Shinozaki K."/>
        </authorList>
    </citation>
    <scope>NUCLEOTIDE SEQUENCE [LARGE SCALE MRNA]</scope>
    <source>
        <strain>cv. Columbia</strain>
    </source>
</reference>
<reference key="4">
    <citation type="journal article" date="2010" name="BMC Genomics">
        <title>Genome-wide cloning and sequence analysis of leucine-rich repeat receptor-like protein kinase genes in Arabidopsis thaliana.</title>
        <authorList>
            <person name="Gou X."/>
            <person name="He K."/>
            <person name="Yang H."/>
            <person name="Yuan T."/>
            <person name="Lin H."/>
            <person name="Clouse S.D."/>
            <person name="Li J."/>
        </authorList>
    </citation>
    <scope>NUCLEOTIDE SEQUENCE [LARGE SCALE MRNA]</scope>
    <source>
        <strain>cv. Columbia</strain>
    </source>
</reference>
<reference key="5">
    <citation type="journal article" date="2005" name="Development">
        <title>Genetic and molecular identification of genes required for female gametophyte development and function in Arabidopsis.</title>
        <authorList>
            <person name="Pagnussat G.C."/>
            <person name="Yu H.-J."/>
            <person name="Ngo Q.A."/>
            <person name="Rajani S."/>
            <person name="Mayalagu S."/>
            <person name="Johnson C.S."/>
            <person name="Capron A."/>
            <person name="Xie L.-F."/>
            <person name="Ye D."/>
            <person name="Sundaresan V."/>
        </authorList>
    </citation>
    <scope>FUNCTION</scope>
    <scope>DISRUPTION PHENOTYPE</scope>
</reference>
<protein>
    <recommendedName>
        <fullName>Probable LRR receptor-like serine/threonine-protein kinase MEE39</fullName>
        <ecNumber>2.7.11.1</ecNumber>
    </recommendedName>
    <alternativeName>
        <fullName>Protein MATERNAL EFFECT EMBRYO ARREST 39</fullName>
    </alternativeName>
</protein>
<comment type="function">
    <text evidence="6">Receptor-like serine/threonine-kinase required during the endosperm development in seeds.</text>
</comment>
<comment type="catalytic activity">
    <reaction>
        <text>L-seryl-[protein] + ATP = O-phospho-L-seryl-[protein] + ADP + H(+)</text>
        <dbReference type="Rhea" id="RHEA:17989"/>
        <dbReference type="Rhea" id="RHEA-COMP:9863"/>
        <dbReference type="Rhea" id="RHEA-COMP:11604"/>
        <dbReference type="ChEBI" id="CHEBI:15378"/>
        <dbReference type="ChEBI" id="CHEBI:29999"/>
        <dbReference type="ChEBI" id="CHEBI:30616"/>
        <dbReference type="ChEBI" id="CHEBI:83421"/>
        <dbReference type="ChEBI" id="CHEBI:456216"/>
        <dbReference type="EC" id="2.7.11.1"/>
    </reaction>
</comment>
<comment type="catalytic activity">
    <reaction>
        <text>L-threonyl-[protein] + ATP = O-phospho-L-threonyl-[protein] + ADP + H(+)</text>
        <dbReference type="Rhea" id="RHEA:46608"/>
        <dbReference type="Rhea" id="RHEA-COMP:11060"/>
        <dbReference type="Rhea" id="RHEA-COMP:11605"/>
        <dbReference type="ChEBI" id="CHEBI:15378"/>
        <dbReference type="ChEBI" id="CHEBI:30013"/>
        <dbReference type="ChEBI" id="CHEBI:30616"/>
        <dbReference type="ChEBI" id="CHEBI:61977"/>
        <dbReference type="ChEBI" id="CHEBI:456216"/>
        <dbReference type="EC" id="2.7.11.1"/>
    </reaction>
</comment>
<comment type="interaction">
    <interactant intactId="EBI-20663701">
        <id>C0LGP2</id>
    </interactant>
    <interactant intactId="EBI-1238677">
        <id>Q9M8T0</id>
        <label>At3g02880</label>
    </interactant>
    <organismsDiffer>false</organismsDiffer>
    <experiments>2</experiments>
</comment>
<comment type="interaction">
    <interactant intactId="EBI-20663701">
        <id>C0LGP2</id>
    </interactant>
    <interactant intactId="EBI-16955024">
        <id>Q9C9Y8</id>
        <label>At3g08680</label>
    </interactant>
    <organismsDiffer>false</organismsDiffer>
    <experiments>2</experiments>
</comment>
<comment type="interaction">
    <interactant intactId="EBI-20663701">
        <id>C0LGP2</id>
    </interactant>
    <interactant intactId="EBI-16934827">
        <id>Q8W4S5</id>
        <label>At5g63710</label>
    </interactant>
    <organismsDiffer>false</organismsDiffer>
    <experiments>2</experiments>
</comment>
<comment type="interaction">
    <interactant intactId="EBI-20663701">
        <id>C0LGP2</id>
    </interactant>
    <interactant intactId="EBI-1626936">
        <id>Q9LVI6</id>
        <label>RLK902</label>
    </interactant>
    <organismsDiffer>false</organismsDiffer>
    <experiments>2</experiments>
</comment>
<comment type="subcellular location">
    <subcellularLocation>
        <location evidence="7">Membrane</location>
        <topology evidence="7">Single-pass type I membrane protein</topology>
    </subcellularLocation>
</comment>
<comment type="disruption phenotype">
    <text evidence="6">Endosperm development arrested.</text>
</comment>
<comment type="similarity">
    <text evidence="3">Belongs to the protein kinase superfamily. Ser/Thr protein kinase family.</text>
</comment>
<comment type="sequence caution" evidence="7">
    <conflict type="erroneous gene model prediction">
        <sequence resource="EMBL-CDS" id="CAB62024"/>
    </conflict>
</comment>
<feature type="signal peptide" evidence="2">
    <location>
        <begin position="1"/>
        <end position="25"/>
    </location>
</feature>
<feature type="chain" id="PRO_0000387515" description="Probable LRR receptor-like serine/threonine-protein kinase MEE39">
    <location>
        <begin position="26"/>
        <end position="878"/>
    </location>
</feature>
<feature type="topological domain" description="Extracellular" evidence="2">
    <location>
        <begin position="26"/>
        <end position="514"/>
    </location>
</feature>
<feature type="transmembrane region" description="Helical" evidence="2">
    <location>
        <begin position="515"/>
        <end position="535"/>
    </location>
</feature>
<feature type="topological domain" description="Cytoplasmic" evidence="2">
    <location>
        <begin position="536"/>
        <end position="878"/>
    </location>
</feature>
<feature type="repeat" description="LRR 1">
    <location>
        <begin position="413"/>
        <end position="436"/>
    </location>
</feature>
<feature type="repeat" description="LRR 2">
    <location>
        <begin position="437"/>
        <end position="458"/>
    </location>
</feature>
<feature type="repeat" description="LRR 3">
    <location>
        <begin position="461"/>
        <end position="483"/>
    </location>
</feature>
<feature type="domain" description="Protein kinase" evidence="3">
    <location>
        <begin position="566"/>
        <end position="840"/>
    </location>
</feature>
<feature type="region of interest" description="Disordered" evidence="5">
    <location>
        <begin position="849"/>
        <end position="878"/>
    </location>
</feature>
<feature type="compositionally biased region" description="Polar residues" evidence="5">
    <location>
        <begin position="849"/>
        <end position="869"/>
    </location>
</feature>
<feature type="active site" description="Proton acceptor" evidence="3 4">
    <location>
        <position position="691"/>
    </location>
</feature>
<feature type="binding site" evidence="3">
    <location>
        <begin position="572"/>
        <end position="580"/>
    </location>
    <ligand>
        <name>ATP</name>
        <dbReference type="ChEBI" id="CHEBI:30616"/>
    </ligand>
</feature>
<feature type="binding site" evidence="3">
    <location>
        <position position="594"/>
    </location>
    <ligand>
        <name>ATP</name>
        <dbReference type="ChEBI" id="CHEBI:30616"/>
    </ligand>
</feature>
<feature type="modified residue" description="Phosphothreonine" evidence="1">
    <location>
        <position position="557"/>
    </location>
</feature>
<feature type="modified residue" description="Phosphotyrosine" evidence="1">
    <location>
        <position position="639"/>
    </location>
</feature>
<feature type="modified residue" description="Phosphoserine" evidence="1">
    <location>
        <position position="726"/>
    </location>
</feature>
<feature type="modified residue" description="Phosphothreonine" evidence="1">
    <location>
        <position position="727"/>
    </location>
</feature>
<feature type="modified residue" description="Phosphothreonine" evidence="1">
    <location>
        <position position="732"/>
    </location>
</feature>
<feature type="modified residue" description="Phosphotyrosine" evidence="1">
    <location>
        <position position="740"/>
    </location>
</feature>
<feature type="glycosylation site" description="N-linked (GlcNAc...) asparagine" evidence="2">
    <location>
        <position position="183"/>
    </location>
</feature>
<feature type="glycosylation site" description="N-linked (GlcNAc...) asparagine" evidence="2">
    <location>
        <position position="203"/>
    </location>
</feature>
<feature type="glycosylation site" description="N-linked (GlcNAc...) asparagine" evidence="2">
    <location>
        <position position="235"/>
    </location>
</feature>
<feature type="glycosylation site" description="N-linked (GlcNAc...) asparagine" evidence="2">
    <location>
        <position position="290"/>
    </location>
</feature>
<feature type="glycosylation site" description="N-linked (GlcNAc...) asparagine" evidence="2">
    <location>
        <position position="404"/>
    </location>
</feature>
<feature type="glycosylation site" description="N-linked (GlcNAc...) asparagine" evidence="2">
    <location>
        <position position="418"/>
    </location>
</feature>
<feature type="glycosylation site" description="N-linked (GlcNAc...) asparagine" evidence="2">
    <location>
        <position position="445"/>
    </location>
</feature>
<feature type="glycosylation site" description="N-linked (GlcNAc...) asparagine" evidence="2">
    <location>
        <position position="466"/>
    </location>
</feature>
<feature type="sequence conflict" description="In Ref. 3; BAF01209/BAF00771." evidence="7" ref="3">
    <original>V</original>
    <variation>M</variation>
    <location>
        <position position="768"/>
    </location>
</feature>
<accession>C0LGP2</accession>
<accession>Q0WNU0</accession>
<accession>Q9SNA4</accession>
<organism>
    <name type="scientific">Arabidopsis thaliana</name>
    <name type="common">Mouse-ear cress</name>
    <dbReference type="NCBI Taxonomy" id="3702"/>
    <lineage>
        <taxon>Eukaryota</taxon>
        <taxon>Viridiplantae</taxon>
        <taxon>Streptophyta</taxon>
        <taxon>Embryophyta</taxon>
        <taxon>Tracheophyta</taxon>
        <taxon>Spermatophyta</taxon>
        <taxon>Magnoliopsida</taxon>
        <taxon>eudicotyledons</taxon>
        <taxon>Gunneridae</taxon>
        <taxon>Pentapetalae</taxon>
        <taxon>rosids</taxon>
        <taxon>malvids</taxon>
        <taxon>Brassicales</taxon>
        <taxon>Brassicaceae</taxon>
        <taxon>Camelineae</taxon>
        <taxon>Arabidopsis</taxon>
    </lineage>
</organism>
<evidence type="ECO:0000250" key="1">
    <source>
        <dbReference type="UniProtKB" id="O48814"/>
    </source>
</evidence>
<evidence type="ECO:0000255" key="2"/>
<evidence type="ECO:0000255" key="3">
    <source>
        <dbReference type="PROSITE-ProRule" id="PRU00159"/>
    </source>
</evidence>
<evidence type="ECO:0000255" key="4">
    <source>
        <dbReference type="PROSITE-ProRule" id="PRU10027"/>
    </source>
</evidence>
<evidence type="ECO:0000256" key="5">
    <source>
        <dbReference type="SAM" id="MobiDB-lite"/>
    </source>
</evidence>
<evidence type="ECO:0000269" key="6">
    <source>
    </source>
</evidence>
<evidence type="ECO:0000305" key="7"/>